<protein>
    <recommendedName>
        <fullName evidence="1">Nuclear export protein</fullName>
        <shortName evidence="1">NEP</shortName>
    </recommendedName>
    <alternativeName>
        <fullName evidence="1">Non-structural protein 2</fullName>
        <shortName evidence="1">NS2</shortName>
    </alternativeName>
</protein>
<comment type="function">
    <text evidence="1">Mediates the nuclear export of encapsidated genomic RNAs (ribonucleoproteins, RNPs). Acts as an adapter between viral RNPs complexes and the nuclear export machinery of the cell. Possesses no intrinsic RNA-binding activity, but includes a C-terminal M1-binding domain. This domain is believed to allow recognition of RNPs bound to the protein M1. Since protein M1 is not available in large quantities before late stages of infection, such an indirect recognition mechanism probably ensures that genomic RNPs are not exported from the host nucleus until sufficient quantities of viral mRNA and progeny genomic RNA have been synthesized. Furthermore, the RNPs enter the host cytoplasm only when associated with the M1 protein that is necessary to guide them to the plasma membrane. May down-regulate viral RNA synthesis when overproduced.</text>
</comment>
<comment type="subunit">
    <text evidence="1">Interacts with protein M1. May interact with host nucleoporin RAB/HRB and exportin XPO1/CRM1.</text>
</comment>
<comment type="subcellular location">
    <subcellularLocation>
        <location evidence="1">Virion</location>
    </subcellularLocation>
    <subcellularLocation>
        <location evidence="1">Host nucleus</location>
    </subcellularLocation>
</comment>
<comment type="alternative products">
    <event type="alternative splicing"/>
    <isoform>
        <id>P03509-1</id>
        <name>NEP</name>
        <name>NS2</name>
        <sequence type="displayed"/>
    </isoform>
    <isoform>
        <id>P03500-1</id>
        <name>NS1</name>
        <sequence type="external"/>
    </isoform>
</comment>
<comment type="miscellaneous">
    <text>Average number present in a viral particle is estimated to be 130-200 molecules.</text>
</comment>
<comment type="similarity">
    <text evidence="1">Belongs to the influenza viruses NEP family.</text>
</comment>
<keyword id="KW-0025">Alternative splicing</keyword>
<keyword id="KW-1048">Host nucleus</keyword>
<keyword id="KW-0945">Host-virus interaction</keyword>
<keyword id="KW-0813">Transport</keyword>
<keyword id="KW-0946">Virion</keyword>
<feature type="chain" id="PRO_0000078987" description="Nuclear export protein">
    <location>
        <begin position="1"/>
        <end position="121"/>
    </location>
</feature>
<feature type="short sequence motif" description="Nuclear export signal" evidence="1">
    <location>
        <begin position="12"/>
        <end position="21"/>
    </location>
</feature>
<feature type="short sequence motif" description="Nuclear export signal" evidence="1">
    <location>
        <begin position="85"/>
        <end position="94"/>
    </location>
</feature>
<feature type="sequence conflict" description="In Ref. 1; CAA24287." ref="1">
    <original>L</original>
    <variation>P</variation>
    <location>
        <position position="106"/>
    </location>
</feature>
<gene>
    <name evidence="1" type="primary">NS</name>
</gene>
<accession>P03509</accession>
<accession>Q0Z7B0</accession>
<dbReference type="EMBL" id="V01101">
    <property type="protein sequence ID" value="CAA24287.1"/>
    <property type="molecule type" value="Genomic_RNA"/>
</dbReference>
<dbReference type="EMBL" id="M60799">
    <property type="protein sequence ID" value="ABG66972.1"/>
    <property type="molecule type" value="Genomic_RNA"/>
</dbReference>
<dbReference type="SMR" id="P03509"/>
<dbReference type="GO" id="GO:0042025">
    <property type="term" value="C:host cell nucleus"/>
    <property type="evidence" value="ECO:0007669"/>
    <property type="project" value="UniProtKB-SubCell"/>
</dbReference>
<dbReference type="GO" id="GO:0044423">
    <property type="term" value="C:virion component"/>
    <property type="evidence" value="ECO:0007669"/>
    <property type="project" value="UniProtKB-UniRule"/>
</dbReference>
<dbReference type="GO" id="GO:0039675">
    <property type="term" value="P:exit of virus from host cell nucleus through nuclear pore"/>
    <property type="evidence" value="ECO:0007669"/>
    <property type="project" value="UniProtKB-UniRule"/>
</dbReference>
<dbReference type="Gene3D" id="1.10.287.230">
    <property type="match status" value="1"/>
</dbReference>
<dbReference type="Gene3D" id="1.10.287.10">
    <property type="entry name" value="S15/NS1, RNA-binding"/>
    <property type="match status" value="1"/>
</dbReference>
<dbReference type="HAMAP" id="MF_04067">
    <property type="entry name" value="INFV_NEP"/>
    <property type="match status" value="1"/>
</dbReference>
<dbReference type="InterPro" id="IPR000968">
    <property type="entry name" value="Flu_NS2"/>
</dbReference>
<dbReference type="Pfam" id="PF00601">
    <property type="entry name" value="Flu_NS2"/>
    <property type="match status" value="1"/>
</dbReference>
<dbReference type="SUPFAM" id="SSF101156">
    <property type="entry name" value="Nonstructural protein ns2, Nep, M1-binding domain"/>
    <property type="match status" value="1"/>
</dbReference>
<proteinExistence type="inferred from homology"/>
<reference key="1">
    <citation type="journal article" date="1980" name="Cell">
        <title>Sequence of interrupted and uninterrupted mRNAs and cloned DNA coding for the two overlapping nonstructural proteins of influenza virus.</title>
        <authorList>
            <person name="Lamb R.A."/>
            <person name="Lai C.-J."/>
        </authorList>
    </citation>
    <scope>NUCLEOTIDE SEQUENCE [GENOMIC RNA]</scope>
</reference>
<reference key="2">
    <citation type="journal article" date="1980" name="Proc. Natl. Acad. Sci. U.S.A.">
        <title>Nucleotide sequence of influenza virus RNA segment 8 indicates that coding regions for NS1 and NS2 proteins overlap.</title>
        <authorList>
            <person name="Porter A.G."/>
            <person name="Smith J.C."/>
            <person name="Emtage J.S."/>
        </authorList>
    </citation>
    <scope>NUCLEOTIDE SEQUENCE [GENOMIC RNA]</scope>
</reference>
<reference key="3">
    <citation type="journal article" date="1991" name="Virology">
        <title>Phylogenetic relationship of the nonstructural (NS) genes of influenza A viruses.</title>
        <authorList>
            <person name="Ludwig S."/>
            <person name="Schultz U."/>
            <person name="Mandler J."/>
            <person name="Fitch W.M."/>
            <person name="Scholtissek C."/>
        </authorList>
    </citation>
    <scope>NUCLEOTIDE SEQUENCE [GENOMIC RNA]</scope>
</reference>
<sequence length="121" mass="14338">MDSNTVSSFQDILMRMSKMQLGSSSEDLNGMITQFESLKLYRDSLGEAVMRMGDLHSLQSRNGKWREQLSQKFEEIRWLIEEVRHRLKITENSFEQITFMQALQLLLEVEQEIRTFSFQLI</sequence>
<organismHost>
    <name type="scientific">Aves</name>
    <dbReference type="NCBI Taxonomy" id="8782"/>
</organismHost>
<evidence type="ECO:0000255" key="1">
    <source>
        <dbReference type="HAMAP-Rule" id="MF_04067"/>
    </source>
</evidence>
<name>NEP_I34A0</name>
<organism>
    <name type="scientific">Influenza A virus (strain A/Fowl plague virus/Rostock/8/1934 H7N1)</name>
    <dbReference type="NCBI Taxonomy" id="392810"/>
    <lineage>
        <taxon>Viruses</taxon>
        <taxon>Riboviria</taxon>
        <taxon>Orthornavirae</taxon>
        <taxon>Negarnaviricota</taxon>
        <taxon>Polyploviricotina</taxon>
        <taxon>Insthoviricetes</taxon>
        <taxon>Articulavirales</taxon>
        <taxon>Orthomyxoviridae</taxon>
        <taxon>Alphainfluenzavirus</taxon>
        <taxon>Alphainfluenzavirus influenzae</taxon>
        <taxon>Influenza A virus</taxon>
    </lineage>
</organism>